<geneLocation type="mitochondrion"/>
<evidence type="ECO:0000250" key="1">
    <source>
        <dbReference type="UniProtKB" id="P00415"/>
    </source>
</evidence>
<evidence type="ECO:0000250" key="2">
    <source>
        <dbReference type="UniProtKB" id="P00420"/>
    </source>
</evidence>
<evidence type="ECO:0000305" key="3"/>
<sequence>MTHQTHAYHMVNPSPWPLTGALSALLMTSGLVMWFHYHSTILVLLGLLTNILTMYQWWRDVVREGTFQGHHTPTVQKGLRYGMVLFIISEVFFFAGFFWAFYHSSLAPTPELGGCWPPTGIHPLDPMEVPLLNTSVLLASGVTITWAHHSLMEGNRKQMLQALFITISLGIYFTLLQASEYHEASFSISDGIYGSTFFMATGFHGLHVIIGSTFLAVCFLRQLKFHFTSNHHFGFEAAAWYWHFVDVVWLFLYVSIYWWGS</sequence>
<gene>
    <name type="primary">MT-CO3</name>
    <name type="synonym">COIII</name>
    <name type="synonym">COXIII</name>
    <name type="synonym">MTCO3</name>
</gene>
<dbReference type="EC" id="7.1.1.9"/>
<dbReference type="EMBL" id="AJ421723">
    <property type="protein sequence ID" value="CAD18914.1"/>
    <property type="molecule type" value="Genomic_DNA"/>
</dbReference>
<dbReference type="SMR" id="Q8W9N0"/>
<dbReference type="CTD" id="4514"/>
<dbReference type="GO" id="GO:0005743">
    <property type="term" value="C:mitochondrial inner membrane"/>
    <property type="evidence" value="ECO:0007669"/>
    <property type="project" value="UniProtKB-SubCell"/>
</dbReference>
<dbReference type="GO" id="GO:0045277">
    <property type="term" value="C:respiratory chain complex IV"/>
    <property type="evidence" value="ECO:0000250"/>
    <property type="project" value="UniProtKB"/>
</dbReference>
<dbReference type="GO" id="GO:0004129">
    <property type="term" value="F:cytochrome-c oxidase activity"/>
    <property type="evidence" value="ECO:0007669"/>
    <property type="project" value="UniProtKB-EC"/>
</dbReference>
<dbReference type="GO" id="GO:0006123">
    <property type="term" value="P:mitochondrial electron transport, cytochrome c to oxygen"/>
    <property type="evidence" value="ECO:0007669"/>
    <property type="project" value="TreeGrafter"/>
</dbReference>
<dbReference type="GO" id="GO:0008535">
    <property type="term" value="P:respiratory chain complex IV assembly"/>
    <property type="evidence" value="ECO:0000250"/>
    <property type="project" value="UniProtKB"/>
</dbReference>
<dbReference type="CDD" id="cd01665">
    <property type="entry name" value="Cyt_c_Oxidase_III"/>
    <property type="match status" value="1"/>
</dbReference>
<dbReference type="FunFam" id="1.10.287.70:FF:000048">
    <property type="entry name" value="Cytochrome c oxidase subunit 3"/>
    <property type="match status" value="1"/>
</dbReference>
<dbReference type="FunFam" id="1.20.120.80:FF:000002">
    <property type="entry name" value="Cytochrome c oxidase subunit 3"/>
    <property type="match status" value="1"/>
</dbReference>
<dbReference type="Gene3D" id="1.10.287.70">
    <property type="match status" value="1"/>
</dbReference>
<dbReference type="Gene3D" id="1.20.120.80">
    <property type="entry name" value="Cytochrome c oxidase, subunit III, four-helix bundle"/>
    <property type="match status" value="1"/>
</dbReference>
<dbReference type="InterPro" id="IPR024791">
    <property type="entry name" value="Cyt_c/ubiquinol_Oxase_su3"/>
</dbReference>
<dbReference type="InterPro" id="IPR033945">
    <property type="entry name" value="Cyt_c_oxase_su3_dom"/>
</dbReference>
<dbReference type="InterPro" id="IPR000298">
    <property type="entry name" value="Cyt_c_oxidase-like_su3"/>
</dbReference>
<dbReference type="InterPro" id="IPR035973">
    <property type="entry name" value="Cyt_c_oxidase_su3-like_sf"/>
</dbReference>
<dbReference type="InterPro" id="IPR013833">
    <property type="entry name" value="Cyt_c_oxidase_su3_a-hlx"/>
</dbReference>
<dbReference type="PANTHER" id="PTHR11403:SF7">
    <property type="entry name" value="CYTOCHROME C OXIDASE SUBUNIT 3"/>
    <property type="match status" value="1"/>
</dbReference>
<dbReference type="PANTHER" id="PTHR11403">
    <property type="entry name" value="CYTOCHROME C OXIDASE SUBUNIT III"/>
    <property type="match status" value="1"/>
</dbReference>
<dbReference type="Pfam" id="PF00510">
    <property type="entry name" value="COX3"/>
    <property type="match status" value="1"/>
</dbReference>
<dbReference type="SUPFAM" id="SSF81452">
    <property type="entry name" value="Cytochrome c oxidase subunit III-like"/>
    <property type="match status" value="1"/>
</dbReference>
<dbReference type="PROSITE" id="PS50253">
    <property type="entry name" value="COX3"/>
    <property type="match status" value="1"/>
</dbReference>
<protein>
    <recommendedName>
        <fullName>Cytochrome c oxidase subunit 3</fullName>
        <ecNumber>7.1.1.9</ecNumber>
    </recommendedName>
    <alternativeName>
        <fullName>Cytochrome c oxidase polypeptide III</fullName>
    </alternativeName>
</protein>
<accession>Q8W9N0</accession>
<feature type="chain" id="PRO_0000183770" description="Cytochrome c oxidase subunit 3">
    <location>
        <begin position="1"/>
        <end position="261"/>
    </location>
</feature>
<feature type="topological domain" description="Mitochondrial matrix" evidence="1">
    <location>
        <begin position="1"/>
        <end position="15"/>
    </location>
</feature>
<feature type="transmembrane region" description="Helical; Name=I" evidence="1">
    <location>
        <begin position="16"/>
        <end position="34"/>
    </location>
</feature>
<feature type="topological domain" description="Mitochondrial intermembrane" evidence="1">
    <location>
        <begin position="35"/>
        <end position="40"/>
    </location>
</feature>
<feature type="transmembrane region" description="Helical; Name=II" evidence="1">
    <location>
        <begin position="41"/>
        <end position="66"/>
    </location>
</feature>
<feature type="topological domain" description="Mitochondrial matrix" evidence="1">
    <location>
        <begin position="67"/>
        <end position="72"/>
    </location>
</feature>
<feature type="transmembrane region" description="Helical; Name=III" evidence="1">
    <location>
        <begin position="73"/>
        <end position="105"/>
    </location>
</feature>
<feature type="topological domain" description="Mitochondrial intermembrane" evidence="1">
    <location>
        <begin position="106"/>
        <end position="128"/>
    </location>
</feature>
<feature type="transmembrane region" description="Helical; Name=IV" evidence="1">
    <location>
        <begin position="129"/>
        <end position="152"/>
    </location>
</feature>
<feature type="topological domain" description="Mitochondrial matrix" evidence="1">
    <location>
        <begin position="153"/>
        <end position="155"/>
    </location>
</feature>
<feature type="transmembrane region" description="Helical; Name=V" evidence="1">
    <location>
        <begin position="156"/>
        <end position="183"/>
    </location>
</feature>
<feature type="topological domain" description="Mitochondrial intermembrane" evidence="1">
    <location>
        <begin position="184"/>
        <end position="190"/>
    </location>
</feature>
<feature type="transmembrane region" description="Helical; Name=VI" evidence="1">
    <location>
        <begin position="191"/>
        <end position="223"/>
    </location>
</feature>
<feature type="topological domain" description="Mitochondrial matrix" evidence="1">
    <location>
        <begin position="224"/>
        <end position="232"/>
    </location>
</feature>
<feature type="transmembrane region" description="Helical; Name=VII" evidence="1">
    <location>
        <begin position="233"/>
        <end position="256"/>
    </location>
</feature>
<feature type="topological domain" description="Mitochondrial intermembrane" evidence="1">
    <location>
        <begin position="257"/>
        <end position="261"/>
    </location>
</feature>
<proteinExistence type="inferred from homology"/>
<keyword id="KW-0472">Membrane</keyword>
<keyword id="KW-0496">Mitochondrion</keyword>
<keyword id="KW-0999">Mitochondrion inner membrane</keyword>
<keyword id="KW-1278">Translocase</keyword>
<keyword id="KW-0812">Transmembrane</keyword>
<keyword id="KW-1133">Transmembrane helix</keyword>
<comment type="function">
    <text evidence="2">Component of the cytochrome c oxidase, the last enzyme in the mitochondrial electron transport chain which drives oxidative phosphorylation. The respiratory chain contains 3 multisubunit complexes succinate dehydrogenase (complex II, CII), ubiquinol-cytochrome c oxidoreductase (cytochrome b-c1 complex, complex III, CIII) and cytochrome c oxidase (complex IV, CIV), that cooperate to transfer electrons derived from NADH and succinate to molecular oxygen, creating an electrochemical gradient over the inner membrane that drives transmembrane transport and the ATP synthase. Cytochrome c oxidase is the component of the respiratory chain that catalyzes the reduction of oxygen to water. Electrons originating from reduced cytochrome c in the intermembrane space (IMS) are transferred via the dinuclear copper A center (CU(A)) of subunit 2 and heme A of subunit 1 to the active site in subunit 1, a binuclear center (BNC) formed by heme A3 and copper B (CU(B)). The BNC reduces molecular oxygen to 2 water molecules using 4 electrons from cytochrome c in the IMS and 4 protons from the mitochondrial matrix.</text>
</comment>
<comment type="catalytic activity">
    <reaction evidence="2">
        <text>4 Fe(II)-[cytochrome c] + O2 + 8 H(+)(in) = 4 Fe(III)-[cytochrome c] + 2 H2O + 4 H(+)(out)</text>
        <dbReference type="Rhea" id="RHEA:11436"/>
        <dbReference type="Rhea" id="RHEA-COMP:10350"/>
        <dbReference type="Rhea" id="RHEA-COMP:14399"/>
        <dbReference type="ChEBI" id="CHEBI:15377"/>
        <dbReference type="ChEBI" id="CHEBI:15378"/>
        <dbReference type="ChEBI" id="CHEBI:15379"/>
        <dbReference type="ChEBI" id="CHEBI:29033"/>
        <dbReference type="ChEBI" id="CHEBI:29034"/>
        <dbReference type="EC" id="7.1.1.9"/>
    </reaction>
    <physiologicalReaction direction="left-to-right" evidence="2">
        <dbReference type="Rhea" id="RHEA:11437"/>
    </physiologicalReaction>
</comment>
<comment type="subunit">
    <text evidence="1">Component of the cytochrome c oxidase (complex IV, CIV), a multisubunit enzyme composed of 14 subunits. The complex is composed of a catalytic core of 3 subunits MT-CO1, MT-CO2 and MT-CO3, encoded in the mitochondrial DNA, and 11 supernumerary subunits COX4I, COX5A, COX5B, COX6A, COX6B, COX6C, COX7A, COX7B, COX7C, COX8 and NDUFA4, which are encoded in the nuclear genome. The complex exists as a monomer or a dimer and forms supercomplexes (SCs) in the inner mitochondrial membrane with NADH-ubiquinone oxidoreductase (complex I, CI) and ubiquinol-cytochrome c oxidoreductase (cytochrome b-c1 complex, complex III, CIII), resulting in different assemblies (supercomplex SCI(1)III(2)IV(1) and megacomplex MCI(2)III(2)IV(2)).</text>
</comment>
<comment type="subcellular location">
    <subcellularLocation>
        <location evidence="1">Mitochondrion inner membrane</location>
        <topology evidence="1">Multi-pass membrane protein</topology>
    </subcellularLocation>
</comment>
<comment type="similarity">
    <text evidence="3">Belongs to the cytochrome c oxidase subunit 3 family.</text>
</comment>
<name>COX3_DUGDU</name>
<reference key="1">
    <citation type="journal article" date="2002" name="Proc. Natl. Acad. Sci. U.S.A.">
        <title>Mammalian mitogenomic relationships and the root of the eutherian tree.</title>
        <authorList>
            <person name="Arnason U."/>
            <person name="Adegoke J.A."/>
            <person name="Bodin K."/>
            <person name="Born E.W."/>
            <person name="Esa Y.B."/>
            <person name="Gullberg A."/>
            <person name="Nilsson M."/>
            <person name="Short R.V."/>
            <person name="Xu X."/>
            <person name="Janke A."/>
        </authorList>
    </citation>
    <scope>NUCLEOTIDE SEQUENCE [GENOMIC DNA]</scope>
</reference>
<organism>
    <name type="scientific">Dugong dugon</name>
    <name type="common">Dugong</name>
    <name type="synonym">Trichechus dugon</name>
    <dbReference type="NCBI Taxonomy" id="29137"/>
    <lineage>
        <taxon>Eukaryota</taxon>
        <taxon>Metazoa</taxon>
        <taxon>Chordata</taxon>
        <taxon>Craniata</taxon>
        <taxon>Vertebrata</taxon>
        <taxon>Euteleostomi</taxon>
        <taxon>Mammalia</taxon>
        <taxon>Eutheria</taxon>
        <taxon>Afrotheria</taxon>
        <taxon>Sirenia</taxon>
        <taxon>Dugongidae</taxon>
        <taxon>Dugong</taxon>
    </lineage>
</organism>